<dbReference type="EC" id="5.4.99.27" evidence="1"/>
<dbReference type="EMBL" id="AM942759">
    <property type="protein sequence ID" value="CAR44449.1"/>
    <property type="molecule type" value="Genomic_DNA"/>
</dbReference>
<dbReference type="RefSeq" id="WP_012368295.1">
    <property type="nucleotide sequence ID" value="NC_010554.1"/>
</dbReference>
<dbReference type="SMR" id="B4F225"/>
<dbReference type="EnsemblBacteria" id="CAR44449">
    <property type="protein sequence ID" value="CAR44449"/>
    <property type="gene ID" value="PMI2240"/>
</dbReference>
<dbReference type="GeneID" id="6801955"/>
<dbReference type="KEGG" id="pmr:PMI2240"/>
<dbReference type="PATRIC" id="fig|529507.6.peg.2187"/>
<dbReference type="eggNOG" id="COG0585">
    <property type="taxonomic scope" value="Bacteria"/>
</dbReference>
<dbReference type="HOGENOM" id="CLU_005281_4_0_6"/>
<dbReference type="Proteomes" id="UP000008319">
    <property type="component" value="Chromosome"/>
</dbReference>
<dbReference type="GO" id="GO:0005829">
    <property type="term" value="C:cytosol"/>
    <property type="evidence" value="ECO:0007669"/>
    <property type="project" value="TreeGrafter"/>
</dbReference>
<dbReference type="GO" id="GO:0003723">
    <property type="term" value="F:RNA binding"/>
    <property type="evidence" value="ECO:0007669"/>
    <property type="project" value="InterPro"/>
</dbReference>
<dbReference type="GO" id="GO:0160150">
    <property type="term" value="F:tRNA pseudouridine(13) synthase activity"/>
    <property type="evidence" value="ECO:0007669"/>
    <property type="project" value="UniProtKB-EC"/>
</dbReference>
<dbReference type="GO" id="GO:0031119">
    <property type="term" value="P:tRNA pseudouridine synthesis"/>
    <property type="evidence" value="ECO:0007669"/>
    <property type="project" value="UniProtKB-UniRule"/>
</dbReference>
<dbReference type="CDD" id="cd02575">
    <property type="entry name" value="PseudoU_synth_EcTruD"/>
    <property type="match status" value="1"/>
</dbReference>
<dbReference type="FunFam" id="3.30.2350.20:FF:000001">
    <property type="entry name" value="tRNA pseudouridine synthase D"/>
    <property type="match status" value="1"/>
</dbReference>
<dbReference type="Gene3D" id="3.30.2350.20">
    <property type="entry name" value="TruD, catalytic domain"/>
    <property type="match status" value="1"/>
</dbReference>
<dbReference type="Gene3D" id="3.30.2340.10">
    <property type="entry name" value="TruD, insertion domain"/>
    <property type="match status" value="1"/>
</dbReference>
<dbReference type="HAMAP" id="MF_01082">
    <property type="entry name" value="TruD"/>
    <property type="match status" value="1"/>
</dbReference>
<dbReference type="InterPro" id="IPR020103">
    <property type="entry name" value="PsdUridine_synth_cat_dom_sf"/>
</dbReference>
<dbReference type="InterPro" id="IPR001656">
    <property type="entry name" value="PsdUridine_synth_TruD"/>
</dbReference>
<dbReference type="InterPro" id="IPR020119">
    <property type="entry name" value="PsdUridine_synth_TruD_CS"/>
</dbReference>
<dbReference type="InterPro" id="IPR011760">
    <property type="entry name" value="PsdUridine_synth_TruD_insert"/>
</dbReference>
<dbReference type="InterPro" id="IPR042214">
    <property type="entry name" value="TruD_catalytic"/>
</dbReference>
<dbReference type="InterPro" id="IPR043165">
    <property type="entry name" value="TruD_insert_sf"/>
</dbReference>
<dbReference type="InterPro" id="IPR050170">
    <property type="entry name" value="TruD_pseudoU_synthase"/>
</dbReference>
<dbReference type="NCBIfam" id="NF002155">
    <property type="entry name" value="PRK00984.1-4"/>
    <property type="match status" value="1"/>
</dbReference>
<dbReference type="NCBIfam" id="TIGR00094">
    <property type="entry name" value="tRNA_TruD_broad"/>
    <property type="match status" value="1"/>
</dbReference>
<dbReference type="PANTHER" id="PTHR47811">
    <property type="entry name" value="TRNA PSEUDOURIDINE SYNTHASE D"/>
    <property type="match status" value="1"/>
</dbReference>
<dbReference type="PANTHER" id="PTHR47811:SF1">
    <property type="entry name" value="TRNA PSEUDOURIDINE SYNTHASE D"/>
    <property type="match status" value="1"/>
</dbReference>
<dbReference type="Pfam" id="PF01142">
    <property type="entry name" value="TruD"/>
    <property type="match status" value="2"/>
</dbReference>
<dbReference type="SUPFAM" id="SSF55120">
    <property type="entry name" value="Pseudouridine synthase"/>
    <property type="match status" value="1"/>
</dbReference>
<dbReference type="PROSITE" id="PS50984">
    <property type="entry name" value="TRUD"/>
    <property type="match status" value="1"/>
</dbReference>
<dbReference type="PROSITE" id="PS01268">
    <property type="entry name" value="UPF0024"/>
    <property type="match status" value="1"/>
</dbReference>
<reference key="1">
    <citation type="journal article" date="2008" name="J. Bacteriol.">
        <title>Complete genome sequence of uropathogenic Proteus mirabilis, a master of both adherence and motility.</title>
        <authorList>
            <person name="Pearson M.M."/>
            <person name="Sebaihia M."/>
            <person name="Churcher C."/>
            <person name="Quail M.A."/>
            <person name="Seshasayee A.S."/>
            <person name="Luscombe N.M."/>
            <person name="Abdellah Z."/>
            <person name="Arrosmith C."/>
            <person name="Atkin B."/>
            <person name="Chillingworth T."/>
            <person name="Hauser H."/>
            <person name="Jagels K."/>
            <person name="Moule S."/>
            <person name="Mungall K."/>
            <person name="Norbertczak H."/>
            <person name="Rabbinowitsch E."/>
            <person name="Walker D."/>
            <person name="Whithead S."/>
            <person name="Thomson N.R."/>
            <person name="Rather P.N."/>
            <person name="Parkhill J."/>
            <person name="Mobley H.L.T."/>
        </authorList>
    </citation>
    <scope>NUCLEOTIDE SEQUENCE [LARGE SCALE GENOMIC DNA]</scope>
    <source>
        <strain>HI4320</strain>
    </source>
</reference>
<accession>B4F225</accession>
<protein>
    <recommendedName>
        <fullName evidence="1">tRNA pseudouridine synthase D</fullName>
        <ecNumber evidence="1">5.4.99.27</ecNumber>
    </recommendedName>
    <alternativeName>
        <fullName evidence="1">tRNA pseudouridine(13) synthase</fullName>
    </alternativeName>
    <alternativeName>
        <fullName evidence="1">tRNA pseudouridylate synthase D</fullName>
    </alternativeName>
    <alternativeName>
        <fullName evidence="1">tRNA-uridine isomerase D</fullName>
    </alternativeName>
</protein>
<comment type="function">
    <text evidence="1">Responsible for synthesis of pseudouridine from uracil-13 in transfer RNAs.</text>
</comment>
<comment type="catalytic activity">
    <reaction evidence="1">
        <text>uridine(13) in tRNA = pseudouridine(13) in tRNA</text>
        <dbReference type="Rhea" id="RHEA:42540"/>
        <dbReference type="Rhea" id="RHEA-COMP:10105"/>
        <dbReference type="Rhea" id="RHEA-COMP:10106"/>
        <dbReference type="ChEBI" id="CHEBI:65314"/>
        <dbReference type="ChEBI" id="CHEBI:65315"/>
        <dbReference type="EC" id="5.4.99.27"/>
    </reaction>
</comment>
<comment type="similarity">
    <text evidence="1">Belongs to the pseudouridine synthase TruD family.</text>
</comment>
<name>TRUD_PROMH</name>
<organism>
    <name type="scientific">Proteus mirabilis (strain HI4320)</name>
    <dbReference type="NCBI Taxonomy" id="529507"/>
    <lineage>
        <taxon>Bacteria</taxon>
        <taxon>Pseudomonadati</taxon>
        <taxon>Pseudomonadota</taxon>
        <taxon>Gammaproteobacteria</taxon>
        <taxon>Enterobacterales</taxon>
        <taxon>Morganellaceae</taxon>
        <taxon>Proteus</taxon>
    </lineage>
</organism>
<keyword id="KW-0413">Isomerase</keyword>
<keyword id="KW-1185">Reference proteome</keyword>
<keyword id="KW-0819">tRNA processing</keyword>
<gene>
    <name evidence="1" type="primary">truD</name>
    <name type="ordered locus">PMI2240</name>
</gene>
<feature type="chain" id="PRO_1000136844" description="tRNA pseudouridine synthase D">
    <location>
        <begin position="1"/>
        <end position="350"/>
    </location>
</feature>
<feature type="domain" description="TRUD" evidence="1">
    <location>
        <begin position="155"/>
        <end position="303"/>
    </location>
</feature>
<feature type="active site" description="Nucleophile" evidence="1">
    <location>
        <position position="80"/>
    </location>
</feature>
<feature type="binding site" evidence="1">
    <location>
        <position position="27"/>
    </location>
    <ligand>
        <name>substrate</name>
    </ligand>
</feature>
<feature type="binding site" evidence="1">
    <location>
        <position position="129"/>
    </location>
    <ligand>
        <name>substrate</name>
    </ligand>
</feature>
<feature type="binding site" evidence="1">
    <location>
        <position position="329"/>
    </location>
    <ligand>
        <name>substrate</name>
    </ligand>
</feature>
<proteinExistence type="inferred from homology"/>
<sequence length="350" mass="39767">MSDLPELHWLHGKPTATGRLKSTPEDFKVSEDLGFTLDGEGEHVMVRVRKTGCNTAFVAEKLAKFAGIHPRDASYAGLKDRNAVTEQWFCLRMPGKEMPDFSQFTLEGCEILTTTRQQRKLRIGTLKGNHFTLVLRDISDVTSVETRLVEIQKQGVPNYFGVQRFGRNGDNLRQAWRWATNEIRVKERSKRSFYLSAARSAMFNHLVSQRLERHIYTQVLCGDAMQLHGKRSWFVAEGAELAQIQTRYEEHDIHITAPLPGKGDLGTQAQALIFETDNLADYEALWSLAQQERVDTTRRAINLLPENMSWHWLDDTTVSLSFFLPAGSFATSVVRELILLGNIDAENISE</sequence>
<evidence type="ECO:0000255" key="1">
    <source>
        <dbReference type="HAMAP-Rule" id="MF_01082"/>
    </source>
</evidence>